<sequence>SESTSFSFTNFNPNQENLILQEDALVNSKGTLELTKNGKPVPESLGRNCTTLASFTTSFSFVMSAPNSLDVADGLAFFLAPPDTQPQKRGGFLGLFKDRKHDISYQSVAVEFDTYSNVWDPNTTHIGIDTNTIESKKITPFDMVYGEKILFASLVFPVSQDILPEYVRVGFSATTGLNEGVVETH</sequence>
<comment type="function">
    <text>N-acetyl-D-galactosamine specific lectin. Binds the Tn determinant (GalNAc-alpha-O-Ser/Thr) of the tumor-associated glycopeptide. Could be required for agglutinating cells such as Tn-exposed erythrocytes.</text>
</comment>
<comment type="subunit">
    <text>Homo- or heterotetramer. V.villosa isolectins are composed of either two subunits a and two subunits B (A2B2), four subunits A (A4), or four subunits B (B4). The predominant form, isolectin B4, has no A1 erythrocyte agglutinating activity.</text>
</comment>
<comment type="miscellaneous">
    <text evidence="1">Binds one manganese (or another transition metal) ion and one calcium ion. The metal ions are essential for the saccharide-binding and cell-agglutinating activities (By similarity).</text>
</comment>
<comment type="similarity">
    <text evidence="3">Belongs to the leguminous lectin family.</text>
</comment>
<proteinExistence type="evidence at protein level"/>
<evidence type="ECO:0000250" key="1"/>
<evidence type="ECO:0000255" key="2"/>
<evidence type="ECO:0000305" key="3"/>
<evidence type="ECO:0007829" key="4">
    <source>
        <dbReference type="PDB" id="1N47"/>
    </source>
</evidence>
<protein>
    <recommendedName>
        <fullName>Lectin B4</fullName>
    </recommendedName>
    <alternativeName>
        <fullName>VVLB4</fullName>
    </alternativeName>
</protein>
<keyword id="KW-0002">3D-structure</keyword>
<keyword id="KW-0106">Calcium</keyword>
<keyword id="KW-0903">Direct protein sequencing</keyword>
<keyword id="KW-0325">Glycoprotein</keyword>
<keyword id="KW-0430">Lectin</keyword>
<keyword id="KW-0464">Manganese</keyword>
<keyword id="KW-0479">Metal-binding</keyword>
<reference key="1">
    <citation type="journal article" date="1997" name="FEBS Lett.">
        <title>Amino acid sequence and three-dimensional structure of the Tn-specific isolectin B4 from Vicia villosa.</title>
        <authorList>
            <person name="Osinaga E."/>
            <person name="Tello D."/>
            <person name="Batthyany C."/>
            <person name="Bianchet M."/>
            <person name="Tavares G."/>
            <person name="Duran R."/>
            <person name="Cervenansky C."/>
            <person name="Camoin L."/>
            <person name="Roseto A."/>
            <person name="Alzari P.M."/>
        </authorList>
    </citation>
    <scope>PROTEIN SEQUENCE</scope>
    <scope>X-RAY CRYSTALLOGRAPHY (2.9 ANGSTROMS)</scope>
    <source>
        <tissue>Seed</tissue>
    </source>
</reference>
<reference key="2">
    <citation type="journal article" date="1983" name="J. Biol. Chem.">
        <title>Isolation and characterization of lectins from Vicia villosa. Two distinct carbohydrate binding activities are present in seed extracts.</title>
        <authorList>
            <person name="Tollefsen S.E."/>
            <person name="Kornfeld R."/>
        </authorList>
    </citation>
    <scope>CHARACTERIZATION</scope>
    <source>
        <tissue>Seed</tissue>
    </source>
</reference>
<dbReference type="PDB" id="1N47">
    <property type="method" value="X-ray"/>
    <property type="resolution" value="2.70 A"/>
    <property type="chains" value="A/B/C/D=2-185"/>
</dbReference>
<dbReference type="PDBsum" id="1N47"/>
<dbReference type="SMR" id="P56625"/>
<dbReference type="IntAct" id="P56625">
    <property type="interactions" value="1"/>
</dbReference>
<dbReference type="UniLectin" id="P56625"/>
<dbReference type="EvolutionaryTrace" id="P56625"/>
<dbReference type="GO" id="GO:0030246">
    <property type="term" value="F:carbohydrate binding"/>
    <property type="evidence" value="ECO:0007669"/>
    <property type="project" value="UniProtKB-KW"/>
</dbReference>
<dbReference type="GO" id="GO:0046872">
    <property type="term" value="F:metal ion binding"/>
    <property type="evidence" value="ECO:0007669"/>
    <property type="project" value="UniProtKB-KW"/>
</dbReference>
<dbReference type="CDD" id="cd06899">
    <property type="entry name" value="lectin_legume_LecRK_Arcelin_ConA"/>
    <property type="match status" value="1"/>
</dbReference>
<dbReference type="Gene3D" id="2.60.120.200">
    <property type="match status" value="1"/>
</dbReference>
<dbReference type="InterPro" id="IPR013320">
    <property type="entry name" value="ConA-like_dom_sf"/>
</dbReference>
<dbReference type="InterPro" id="IPR000985">
    <property type="entry name" value="Lectin_LegA_CS"/>
</dbReference>
<dbReference type="InterPro" id="IPR019825">
    <property type="entry name" value="Lectin_legB_Mn/Ca_BS"/>
</dbReference>
<dbReference type="InterPro" id="IPR001220">
    <property type="entry name" value="Legume_lectin_dom"/>
</dbReference>
<dbReference type="InterPro" id="IPR050258">
    <property type="entry name" value="Leguminous_Lectin"/>
</dbReference>
<dbReference type="PANTHER" id="PTHR32401">
    <property type="entry name" value="CONCANAVALIN A-LIKE LECTIN FAMILY PROTEIN"/>
    <property type="match status" value="1"/>
</dbReference>
<dbReference type="PANTHER" id="PTHR32401:SF45">
    <property type="entry name" value="LECTIN"/>
    <property type="match status" value="1"/>
</dbReference>
<dbReference type="Pfam" id="PF00139">
    <property type="entry name" value="Lectin_legB"/>
    <property type="match status" value="1"/>
</dbReference>
<dbReference type="SUPFAM" id="SSF49899">
    <property type="entry name" value="Concanavalin A-like lectins/glucanases"/>
    <property type="match status" value="1"/>
</dbReference>
<dbReference type="PROSITE" id="PS00308">
    <property type="entry name" value="LECTIN_LEGUME_ALPHA"/>
    <property type="match status" value="1"/>
</dbReference>
<dbReference type="PROSITE" id="PS00307">
    <property type="entry name" value="LECTIN_LEGUME_BETA"/>
    <property type="match status" value="1"/>
</dbReference>
<organism>
    <name type="scientific">Vicia villosa</name>
    <name type="common">Hairy vetch</name>
    <dbReference type="NCBI Taxonomy" id="3911"/>
    <lineage>
        <taxon>Eukaryota</taxon>
        <taxon>Viridiplantae</taxon>
        <taxon>Streptophyta</taxon>
        <taxon>Embryophyta</taxon>
        <taxon>Tracheophyta</taxon>
        <taxon>Spermatophyta</taxon>
        <taxon>Magnoliopsida</taxon>
        <taxon>eudicotyledons</taxon>
        <taxon>Gunneridae</taxon>
        <taxon>Pentapetalae</taxon>
        <taxon>rosids</taxon>
        <taxon>fabids</taxon>
        <taxon>Fabales</taxon>
        <taxon>Fabaceae</taxon>
        <taxon>Papilionoideae</taxon>
        <taxon>50 kb inversion clade</taxon>
        <taxon>NPAAA clade</taxon>
        <taxon>Hologalegina</taxon>
        <taxon>IRL clade</taxon>
        <taxon>Fabeae</taxon>
        <taxon>Vicia</taxon>
    </lineage>
</organism>
<name>LEC_VICVI</name>
<accession>P56625</accession>
<feature type="chain" id="PRO_0000105118" description="Lectin B4">
    <location>
        <begin position="1"/>
        <end position="185" status="greater than"/>
    </location>
</feature>
<feature type="binding site" evidence="1">
    <location>
        <position position="111"/>
    </location>
    <ligand>
        <name>Mn(2+)</name>
        <dbReference type="ChEBI" id="CHEBI:29035"/>
    </ligand>
</feature>
<feature type="binding site" evidence="1">
    <location>
        <position position="113"/>
    </location>
    <ligand>
        <name>Ca(2+)</name>
        <dbReference type="ChEBI" id="CHEBI:29108"/>
    </ligand>
</feature>
<feature type="binding site" evidence="1">
    <location>
        <position position="113"/>
    </location>
    <ligand>
        <name>Mn(2+)</name>
        <dbReference type="ChEBI" id="CHEBI:29035"/>
    </ligand>
</feature>
<feature type="binding site" evidence="1">
    <location>
        <position position="115"/>
    </location>
    <ligand>
        <name>Ca(2+)</name>
        <dbReference type="ChEBI" id="CHEBI:29108"/>
    </ligand>
</feature>
<feature type="binding site" evidence="1">
    <location>
        <position position="117"/>
    </location>
    <ligand>
        <name>Ca(2+)</name>
        <dbReference type="ChEBI" id="CHEBI:29108"/>
    </ligand>
</feature>
<feature type="binding site" evidence="1">
    <location>
        <position position="120"/>
    </location>
    <ligand>
        <name>Ca(2+)</name>
        <dbReference type="ChEBI" id="CHEBI:29108"/>
    </ligand>
</feature>
<feature type="binding site" evidence="1">
    <location>
        <position position="120"/>
    </location>
    <ligand>
        <name>Mn(2+)</name>
        <dbReference type="ChEBI" id="CHEBI:29035"/>
    </ligand>
</feature>
<feature type="binding site" evidence="1">
    <location>
        <position position="125"/>
    </location>
    <ligand>
        <name>Mn(2+)</name>
        <dbReference type="ChEBI" id="CHEBI:29035"/>
    </ligand>
</feature>
<feature type="glycosylation site" description="N-linked (GlcNAc...) asparagine" evidence="2">
    <location>
        <position position="48"/>
    </location>
</feature>
<feature type="glycosylation site" description="N-linked (GlcNAc...) asparagine" evidence="2">
    <location>
        <position position="122"/>
    </location>
</feature>
<feature type="non-consecutive residues" evidence="3">
    <location>
        <begin position="47"/>
        <end position="48"/>
    </location>
</feature>
<feature type="non-consecutive residues" evidence="3">
    <location>
        <begin position="148"/>
        <end position="149"/>
    </location>
</feature>
<feature type="non-consecutive residues" evidence="3">
    <location>
        <begin position="160"/>
        <end position="161"/>
    </location>
</feature>
<feature type="non-terminal residue">
    <location>
        <position position="185"/>
    </location>
</feature>
<feature type="strand" evidence="4">
    <location>
        <begin position="2"/>
        <end position="10"/>
    </location>
</feature>
<feature type="strand" evidence="4">
    <location>
        <begin position="18"/>
        <end position="22"/>
    </location>
</feature>
<feature type="strand" evidence="4">
    <location>
        <begin position="32"/>
        <end position="35"/>
    </location>
</feature>
<feature type="strand" evidence="4">
    <location>
        <begin position="37"/>
        <end position="40"/>
    </location>
</feature>
<feature type="strand" evidence="4">
    <location>
        <begin position="45"/>
        <end position="47"/>
    </location>
</feature>
<feature type="strand" evidence="4">
    <location>
        <begin position="54"/>
        <end position="62"/>
    </location>
</feature>
<feature type="strand" evidence="4">
    <location>
        <begin position="73"/>
        <end position="80"/>
    </location>
</feature>
<feature type="helix" evidence="4">
    <location>
        <begin position="90"/>
        <end position="92"/>
    </location>
</feature>
<feature type="turn" evidence="4">
    <location>
        <begin position="93"/>
        <end position="95"/>
    </location>
</feature>
<feature type="strand" evidence="4">
    <location>
        <begin position="97"/>
        <end position="100"/>
    </location>
</feature>
<feature type="helix" evidence="4">
    <location>
        <begin position="103"/>
        <end position="105"/>
    </location>
</feature>
<feature type="strand" evidence="4">
    <location>
        <begin position="108"/>
        <end position="113"/>
    </location>
</feature>
<feature type="strand" evidence="4">
    <location>
        <begin position="125"/>
        <end position="134"/>
    </location>
</feature>
<feature type="strand" evidence="4">
    <location>
        <begin position="136"/>
        <end position="140"/>
    </location>
</feature>
<feature type="strand" evidence="4">
    <location>
        <begin position="149"/>
        <end position="156"/>
    </location>
</feature>
<feature type="turn" evidence="4">
    <location>
        <begin position="157"/>
        <end position="160"/>
    </location>
</feature>
<feature type="strand" evidence="4">
    <location>
        <begin position="165"/>
        <end position="175"/>
    </location>
</feature>